<name>WBDC_ECOLX</name>
<organism>
    <name type="scientific">Escherichia coli</name>
    <dbReference type="NCBI Taxonomy" id="562"/>
    <lineage>
        <taxon>Bacteria</taxon>
        <taxon>Pseudomonadati</taxon>
        <taxon>Pseudomonadota</taxon>
        <taxon>Gammaproteobacteria</taxon>
        <taxon>Enterobacterales</taxon>
        <taxon>Enterobacteriaceae</taxon>
        <taxon>Escherichia</taxon>
    </lineage>
</organism>
<feature type="chain" id="PRO_0000459450" description="O-antigen chain mannosyltransferase C">
    <location>
        <begin position="1"/>
        <end position="371"/>
    </location>
</feature>
<feature type="mutagenesis site" description="Drastic reduction in activity." evidence="2">
    <original>E</original>
    <variation>A</variation>
    <location>
        <position position="275"/>
    </location>
</feature>
<feature type="mutagenesis site" description="No effect on activity." evidence="2">
    <original>E</original>
    <variation>A</variation>
    <location>
        <position position="283"/>
    </location>
</feature>
<proteinExistence type="evidence at protein level"/>
<sequence>MRVLHVYKTYYPDTYGGIEQVIYQLSQGCARRGIAADVFTFSPDKETGPVAYEDHRVIYNKQLFEIASTPFSLKALKRFKQIKDDYDIINYHFPFPFMDMLHLSARPDARTVVTYHSDIVKQKRLMKLYQPLQERFLASVDCIVASSPNYVASSQTLKKYQDKTVVIPFGLEQHDVQHDSQRVAHWRETVGDNFFLFVGAFRYYKGLHILLDAAERSRLPVVIVGGGPLEAEVRREAQQRGLSNVVFTGMLNDEDKYILFQLCRGVVFPSHLRSEAFGITLLEGARFARPLISCEIGTGTSFINQDKVSGCVIPPNDSQALVEAMNELWNNEETSNRYGENSRRRFEEMFTADHMIDAYVNLYTTLLESKS</sequence>
<evidence type="ECO:0000269" key="1">
    <source>
    </source>
</evidence>
<evidence type="ECO:0000269" key="2">
    <source>
    </source>
</evidence>
<evidence type="ECO:0000269" key="3">
    <source>
    </source>
</evidence>
<evidence type="ECO:0000303" key="4">
    <source>
    </source>
</evidence>
<evidence type="ECO:0000303" key="5">
    <source>
    </source>
</evidence>
<evidence type="ECO:0000305" key="6"/>
<evidence type="ECO:0000305" key="7">
    <source>
    </source>
</evidence>
<protein>
    <recommendedName>
        <fullName evidence="6">O-antigen chain mannosyltransferase C</fullName>
        <ecNumber evidence="1 7">2.4.1.348</ecNumber>
    </recommendedName>
    <alternativeName>
        <fullName evidence="6">N-acetyl-alpha-D-glucosaminyl-diphospho-ditrans,octacis-undecaprenol 3-alpha-mannosyltransferase</fullName>
    </alternativeName>
</protein>
<comment type="function">
    <text evidence="1 2 3">Mannosyltransferase involved in the biosynthesis of the repeat unit of the lipopolysaccharide (LPS) O-antigen region (PubMed:22875852, PubMed:22989876, PubMed:7536735). Catalyzes the transfer of a single alpha-(1-&gt;3)-linked mannose residue to the acceptor N-acetyl-glucosaminyl-diphospho-undecaprenol during the synthesis of the adapter region (PubMed:22875852).</text>
</comment>
<comment type="catalytic activity">
    <reaction evidence="1 7">
        <text>N-acetyl-alpha-D-glucosaminyl-di-trans,octa-cis-undecaprenyl diphosphate + GDP-alpha-D-mannose = alpha-D-mannosyl-(1-&gt;3)-N-acetyl-alpha-D-glucosaminyl-di-trans,octa-cis-undecaprenyl diphosphate + GDP + H(+)</text>
        <dbReference type="Rhea" id="RHEA:53316"/>
        <dbReference type="ChEBI" id="CHEBI:15378"/>
        <dbReference type="ChEBI" id="CHEBI:57527"/>
        <dbReference type="ChEBI" id="CHEBI:58189"/>
        <dbReference type="ChEBI" id="CHEBI:62959"/>
        <dbReference type="ChEBI" id="CHEBI:137168"/>
        <dbReference type="EC" id="2.4.1.348"/>
    </reaction>
    <physiologicalReaction direction="left-to-right" evidence="1">
        <dbReference type="Rhea" id="RHEA:53317"/>
    </physiologicalReaction>
</comment>
<comment type="pathway">
    <text evidence="1 2 3">Bacterial outer membrane biogenesis; LPS O-antigen biosynthesis.</text>
</comment>
<comment type="similarity">
    <text evidence="6">Belongs to the glycosyltransferase group 1 family. Glycosyltransferase 4 subfamily.</text>
</comment>
<comment type="sequence caution" evidence="6">
    <conflict type="erroneous initiation">
        <sequence resource="EMBL-CDS" id="BAA07752"/>
    </conflict>
    <text>Truncated N-terminus.</text>
</comment>
<accession>Q47595</accession>
<gene>
    <name evidence="4" type="primary">wbdC</name>
    <name evidence="5" type="synonym">mtfC</name>
</gene>
<keyword id="KW-0328">Glycosyltransferase</keyword>
<keyword id="KW-0448">Lipopolysaccharide biosynthesis</keyword>
<keyword id="KW-0808">Transferase</keyword>
<dbReference type="EC" id="2.4.1.348" evidence="1 7"/>
<dbReference type="EMBL" id="D43637">
    <property type="protein sequence ID" value="BAA07752.1"/>
    <property type="status" value="ALT_INIT"/>
    <property type="molecule type" value="Genomic_DNA"/>
</dbReference>
<dbReference type="PIR" id="I76777">
    <property type="entry name" value="I76777"/>
</dbReference>
<dbReference type="SMR" id="Q47595"/>
<dbReference type="CAZy" id="GT4">
    <property type="family name" value="Glycosyltransferase Family 4"/>
</dbReference>
<dbReference type="BioCyc" id="MetaCyc:MONOMER-21641"/>
<dbReference type="UniPathway" id="UPA00281"/>
<dbReference type="GO" id="GO:0016757">
    <property type="term" value="F:glycosyltransferase activity"/>
    <property type="evidence" value="ECO:0007669"/>
    <property type="project" value="UniProtKB-KW"/>
</dbReference>
<dbReference type="GO" id="GO:0009243">
    <property type="term" value="P:O antigen biosynthetic process"/>
    <property type="evidence" value="ECO:0007669"/>
    <property type="project" value="UniProtKB-UniPathway"/>
</dbReference>
<dbReference type="CDD" id="cd03795">
    <property type="entry name" value="GT4_WfcD-like"/>
    <property type="match status" value="1"/>
</dbReference>
<dbReference type="Gene3D" id="3.40.50.2000">
    <property type="entry name" value="Glycogen Phosphorylase B"/>
    <property type="match status" value="2"/>
</dbReference>
<dbReference type="InterPro" id="IPR001296">
    <property type="entry name" value="Glyco_trans_1"/>
</dbReference>
<dbReference type="InterPro" id="IPR028098">
    <property type="entry name" value="Glyco_trans_4-like_N"/>
</dbReference>
<dbReference type="InterPro" id="IPR050194">
    <property type="entry name" value="Glycosyltransferase_grp1"/>
</dbReference>
<dbReference type="PANTHER" id="PTHR45947">
    <property type="entry name" value="SULFOQUINOVOSYL TRANSFERASE SQD2"/>
    <property type="match status" value="1"/>
</dbReference>
<dbReference type="PANTHER" id="PTHR45947:SF3">
    <property type="entry name" value="SULFOQUINOVOSYL TRANSFERASE SQD2"/>
    <property type="match status" value="1"/>
</dbReference>
<dbReference type="Pfam" id="PF13439">
    <property type="entry name" value="Glyco_transf_4"/>
    <property type="match status" value="1"/>
</dbReference>
<dbReference type="Pfam" id="PF00534">
    <property type="entry name" value="Glycos_transf_1"/>
    <property type="match status" value="1"/>
</dbReference>
<dbReference type="SUPFAM" id="SSF53756">
    <property type="entry name" value="UDP-Glycosyltransferase/glycogen phosphorylase"/>
    <property type="match status" value="1"/>
</dbReference>
<reference key="1">
    <citation type="journal article" date="1995" name="J. Bacteriol.">
        <title>Expression of the O9 polysaccharide of Escherichia coli: sequencing of the E. coli O9 rfb gene cluster, characterization of mannosyl transferases, and evidence for an ATP-binding cassette transport system.</title>
        <authorList>
            <person name="Kido N."/>
            <person name="Torgov V.I."/>
            <person name="Sugiyama T."/>
            <person name="Uchiya K."/>
            <person name="Sugihara H."/>
            <person name="Komatsu T."/>
            <person name="Kato N."/>
            <person name="Jann K."/>
        </authorList>
    </citation>
    <scope>NUCLEOTIDE SEQUENCE [GENOMIC DNA]</scope>
    <scope>FUNCTION</scope>
    <scope>PATHWAY</scope>
    <source>
        <strain>O9a:K31-:H- / F719</strain>
    </source>
</reference>
<reference key="2">
    <citation type="journal article" date="2012" name="J. Biol. Chem.">
        <title>Biosynthesis of the polymannose lipopolysaccharide O-antigens from Escherichia coli serotypes O8 and O9a requires a unique combination of single- and multiple-active site mannosyltransferases.</title>
        <authorList>
            <person name="Greenfield L.K."/>
            <person name="Richards M.R."/>
            <person name="Li J."/>
            <person name="Wakarchuk W.W."/>
            <person name="Lowary T.L."/>
            <person name="Whitfield C."/>
        </authorList>
    </citation>
    <scope>FUNCTION</scope>
    <scope>CATALYTIC ACTIVITY</scope>
    <scope>PATHWAY</scope>
    <source>
        <strain>O9a</strain>
    </source>
</reference>
<reference key="3">
    <citation type="journal article" date="2012" name="J. Biol. Chem.">
        <title>Domain organization of the polymerizing mannosyltransferases involved in synthesis of the Escherichia coli O8 and O9a lipopolysaccharide O-antigens.</title>
        <authorList>
            <person name="Greenfield L.K."/>
            <person name="Richards M.R."/>
            <person name="Vinogradov E."/>
            <person name="Wakarchuk W.W."/>
            <person name="Lowary T.L."/>
            <person name="Whitfield C."/>
        </authorList>
    </citation>
    <scope>FUNCTION</scope>
    <scope>PATHWAY</scope>
    <scope>MUTAGENESIS OF GLU-275 AND GLU-283</scope>
    <source>
        <strain>O9a</strain>
    </source>
</reference>